<accession>O89748</accession>
<feature type="chain" id="PRO_0000324283" description="Non-structural protein 1">
    <location>
        <begin position="1"/>
        <end position="230"/>
    </location>
</feature>
<feature type="region of interest" description="RNA-binding and homodimerization" evidence="1">
    <location>
        <begin position="1"/>
        <end position="73"/>
    </location>
</feature>
<feature type="region of interest" description="CPSF4-binding" evidence="1">
    <location>
        <begin position="180"/>
        <end position="215"/>
    </location>
</feature>
<feature type="region of interest" description="Disordered" evidence="2">
    <location>
        <begin position="207"/>
        <end position="230"/>
    </location>
</feature>
<feature type="region of interest" description="PABPN1-binding" evidence="1">
    <location>
        <begin position="223"/>
        <end position="230"/>
    </location>
</feature>
<feature type="short sequence motif" description="Nuclear localization signal" evidence="1">
    <location>
        <begin position="34"/>
        <end position="38"/>
    </location>
</feature>
<feature type="short sequence motif" description="Nuclear export signal" evidence="1">
    <location>
        <begin position="137"/>
        <end position="146"/>
    </location>
</feature>
<evidence type="ECO:0000255" key="1">
    <source>
        <dbReference type="HAMAP-Rule" id="MF_04066"/>
    </source>
</evidence>
<evidence type="ECO:0000256" key="2">
    <source>
        <dbReference type="SAM" id="MobiDB-lite"/>
    </source>
</evidence>
<proteinExistence type="inferred from homology"/>
<dbReference type="EMBL" id="AF046083">
    <property type="protein sequence ID" value="AAC32082.1"/>
    <property type="molecule type" value="Genomic_RNA"/>
</dbReference>
<dbReference type="SMR" id="O89748"/>
<dbReference type="GO" id="GO:0030430">
    <property type="term" value="C:host cell cytoplasm"/>
    <property type="evidence" value="ECO:0007669"/>
    <property type="project" value="UniProtKB-SubCell"/>
</dbReference>
<dbReference type="GO" id="GO:0042025">
    <property type="term" value="C:host cell nucleus"/>
    <property type="evidence" value="ECO:0007669"/>
    <property type="project" value="UniProtKB-SubCell"/>
</dbReference>
<dbReference type="GO" id="GO:0030291">
    <property type="term" value="F:protein serine/threonine kinase inhibitor activity"/>
    <property type="evidence" value="ECO:0007669"/>
    <property type="project" value="UniProtKB-KW"/>
</dbReference>
<dbReference type="GO" id="GO:0003723">
    <property type="term" value="F:RNA binding"/>
    <property type="evidence" value="ECO:0007669"/>
    <property type="project" value="UniProtKB-KW"/>
</dbReference>
<dbReference type="GO" id="GO:0039540">
    <property type="term" value="P:symbiont-mediated suppression of host cytoplasmic pattern recognition receptor signaling pathway via inhibition of RIG-I activity"/>
    <property type="evidence" value="ECO:0007669"/>
    <property type="project" value="UniProtKB-KW"/>
</dbReference>
<dbReference type="GO" id="GO:0039657">
    <property type="term" value="P:symbiont-mediated suppression of host gene expression"/>
    <property type="evidence" value="ECO:0007669"/>
    <property type="project" value="UniProtKB-KW"/>
</dbReference>
<dbReference type="GO" id="GO:0039524">
    <property type="term" value="P:symbiont-mediated suppression of host mRNA processing"/>
    <property type="evidence" value="ECO:0007669"/>
    <property type="project" value="UniProtKB-KW"/>
</dbReference>
<dbReference type="GO" id="GO:0039580">
    <property type="term" value="P:symbiont-mediated suppression of host PKR/eIFalpha signaling"/>
    <property type="evidence" value="ECO:0007669"/>
    <property type="project" value="UniProtKB-KW"/>
</dbReference>
<dbReference type="GO" id="GO:0039502">
    <property type="term" value="P:symbiont-mediated suppression of host type I interferon-mediated signaling pathway"/>
    <property type="evidence" value="ECO:0007669"/>
    <property type="project" value="UniProtKB-KW"/>
</dbReference>
<dbReference type="FunFam" id="1.10.287.10:FF:000001">
    <property type="entry name" value="Non-structural protein 1"/>
    <property type="match status" value="1"/>
</dbReference>
<dbReference type="FunFam" id="3.30.420.330:FF:000001">
    <property type="entry name" value="Non-structural protein 1"/>
    <property type="match status" value="1"/>
</dbReference>
<dbReference type="Gene3D" id="3.30.420.330">
    <property type="entry name" value="Influenza virus non-structural protein, effector domain"/>
    <property type="match status" value="1"/>
</dbReference>
<dbReference type="Gene3D" id="1.10.287.10">
    <property type="entry name" value="S15/NS1, RNA-binding"/>
    <property type="match status" value="1"/>
</dbReference>
<dbReference type="HAMAP" id="MF_04066">
    <property type="entry name" value="INFV_NS1"/>
    <property type="match status" value="1"/>
</dbReference>
<dbReference type="InterPro" id="IPR004208">
    <property type="entry name" value="NS1"/>
</dbReference>
<dbReference type="InterPro" id="IPR000256">
    <property type="entry name" value="NS1A"/>
</dbReference>
<dbReference type="InterPro" id="IPR038064">
    <property type="entry name" value="NS1A_effect_dom-like_sf"/>
</dbReference>
<dbReference type="InterPro" id="IPR009068">
    <property type="entry name" value="uS15_NS1_RNA-bd_sf"/>
</dbReference>
<dbReference type="Pfam" id="PF00600">
    <property type="entry name" value="Flu_NS1"/>
    <property type="match status" value="1"/>
</dbReference>
<dbReference type="SUPFAM" id="SSF143021">
    <property type="entry name" value="Ns1 effector domain-like"/>
    <property type="match status" value="1"/>
</dbReference>
<dbReference type="SUPFAM" id="SSF47060">
    <property type="entry name" value="S15/NS1 RNA-binding domain"/>
    <property type="match status" value="1"/>
</dbReference>
<gene>
    <name evidence="1" type="primary">NS</name>
</gene>
<reference key="1">
    <citation type="journal article" date="1998" name="J. Virol.">
        <title>Comparisons of highly virulent H5N1 influenza A viruses isolated from humans and chickens from Hong Kong.</title>
        <authorList>
            <person name="Suarez D.L."/>
            <person name="Perdue M.L."/>
            <person name="Cox N."/>
            <person name="Rowe T."/>
            <person name="Bender C."/>
            <person name="Huang J."/>
            <person name="Swayne D.E."/>
        </authorList>
    </citation>
    <scope>NUCLEOTIDE SEQUENCE [GENOMIC RNA]</scope>
</reference>
<protein>
    <recommendedName>
        <fullName evidence="1">Non-structural protein 1</fullName>
        <shortName evidence="1">NS1</shortName>
    </recommendedName>
    <alternativeName>
        <fullName evidence="1">NS1A</fullName>
    </alternativeName>
</protein>
<organism>
    <name type="scientific">Influenza A virus (strain A/Chicken/Hong Kong/220/1997 H5N1 genotype Gs/Gd)</name>
    <dbReference type="NCBI Taxonomy" id="100834"/>
    <lineage>
        <taxon>Viruses</taxon>
        <taxon>Riboviria</taxon>
        <taxon>Orthornavirae</taxon>
        <taxon>Negarnaviricota</taxon>
        <taxon>Polyploviricotina</taxon>
        <taxon>Insthoviricetes</taxon>
        <taxon>Articulavirales</taxon>
        <taxon>Orthomyxoviridae</taxon>
        <taxon>Alphainfluenzavirus</taxon>
        <taxon>Alphainfluenzavirus influenzae</taxon>
        <taxon>Influenza A virus</taxon>
    </lineage>
</organism>
<organismHost>
    <name type="scientific">Aves</name>
    <dbReference type="NCBI Taxonomy" id="8782"/>
</organismHost>
<organismHost>
    <name type="scientific">Felis catus</name>
    <name type="common">Cat</name>
    <name type="synonym">Felis silvestris catus</name>
    <dbReference type="NCBI Taxonomy" id="9685"/>
</organismHost>
<organismHost>
    <name type="scientific">Homo sapiens</name>
    <name type="common">Human</name>
    <dbReference type="NCBI Taxonomy" id="9606"/>
</organismHost>
<organismHost>
    <name type="scientific">Panthera pardus</name>
    <name type="common">Leopard</name>
    <name type="synonym">Felis pardus</name>
    <dbReference type="NCBI Taxonomy" id="9691"/>
</organismHost>
<organismHost>
    <name type="scientific">Panthera tigris</name>
    <name type="common">Tiger</name>
    <dbReference type="NCBI Taxonomy" id="9694"/>
</organismHost>
<organismHost>
    <name type="scientific">Sus scrofa</name>
    <name type="common">Pig</name>
    <dbReference type="NCBI Taxonomy" id="9823"/>
</organismHost>
<keyword id="KW-0025">Alternative splicing</keyword>
<keyword id="KW-1262">Eukaryotic host gene expression shutoff by virus</keyword>
<keyword id="KW-1035">Host cytoplasm</keyword>
<keyword id="KW-1190">Host gene expression shutoff by virus</keyword>
<keyword id="KW-1192">Host mRNA suppression by virus</keyword>
<keyword id="KW-1048">Host nucleus</keyword>
<keyword id="KW-0945">Host-virus interaction</keyword>
<keyword id="KW-1090">Inhibition of host innate immune response by virus</keyword>
<keyword id="KW-1114">Inhibition of host interferon signaling pathway by virus</keyword>
<keyword id="KW-1102">Inhibition of host PKR by virus</keyword>
<keyword id="KW-1103">Inhibition of host pre-mRNA processing by virus</keyword>
<keyword id="KW-1088">Inhibition of host RIG-I by virus</keyword>
<keyword id="KW-1113">Inhibition of host RLR pathway by virus</keyword>
<keyword id="KW-0922">Interferon antiviral system evasion</keyword>
<keyword id="KW-0694">RNA-binding</keyword>
<keyword id="KW-0832">Ubl conjugation</keyword>
<keyword id="KW-0899">Viral immunoevasion</keyword>
<comment type="function">
    <text evidence="1">Inhibits post-transcriptional processing of cellular pre-mRNA, by binding and inhibiting two cellular proteins that are required for the 3'-end processing of cellular pre-mRNAs: the 30 kDa cleavage and polyadenylation specificity factor/CPSF4 and the poly(A)-binding protein 2/PABPN1. In turn, unprocessed 3' end pre-mRNAs accumulate in the host nucleus and are no longer exported to the cytoplasm. Cellular protein synthesis is thereby shut off very early after virus infection. Viral protein synthesis is not affected by the inhibition of the cellular 3' end processing machinery because the poly(A) tails of viral mRNAs are produced by the viral polymerase through a stuttering mechanism. Prevents the establishment of the cellular antiviral state by inhibiting TRIM25-mediated RIGI ubiquitination, which normally triggers the antiviral transduction signal that leads to the activation of type I IFN genes by transcription factors IRF3 and IRF7. Also binds poly(A) and U6 snRNA. Inhibits the integrated stress response (ISR) in the infected cell by blocking dsRNA binding by EIF2AK2/PKR and further phosphorylation of EIF2S1/EIF-2ALPHA. Stress granule formation is thus inhibited, which allows protein synthesis and viral replication.</text>
</comment>
<comment type="subunit">
    <text evidence="1">Homodimer. Interacts with host TRIM25 (via coiled coil); this interaction specifically inhibits TRIM25 multimerization and TRIM25-mediated RIGI CARD ubiquitination. Interacts with human EIF2AK2/PKR, CPSF4, IVNS1ABP and PABPN1.</text>
</comment>
<comment type="subcellular location">
    <subcellularLocation>
        <location evidence="1">Host nucleus</location>
    </subcellularLocation>
    <subcellularLocation>
        <location evidence="1">Host cytoplasm</location>
    </subcellularLocation>
    <text evidence="1">In uninfected, transfected cells, NS1 is localized in the nucleus. Only in virus infected cells, the nuclear export signal is unveiled, presumably by a viral protein, and a fraction of NS1 is exported in the cytoplasm.</text>
</comment>
<comment type="alternative products">
    <event type="alternative splicing"/>
    <isoform>
        <id>O89748-1</id>
        <name>NS1</name>
        <sequence type="displayed"/>
    </isoform>
    <isoform>
        <id>O89747-1</id>
        <name>NEP</name>
        <name>NS2</name>
        <sequence type="external"/>
    </isoform>
</comment>
<comment type="domain">
    <text evidence="1">The dsRNA-binding region is required for suppression of RNA silencing.</text>
</comment>
<comment type="PTM">
    <text evidence="1">Upon interferon induction, ISGylated via host HERC5; this results in the impairment of NS1 interaction with RNA targets due to its inability to form homodimers and to interact with host EIF2AK2/PKR.</text>
</comment>
<comment type="similarity">
    <text evidence="1">Belongs to the influenza A viruses NS1 family.</text>
</comment>
<sequence>MNSNTVSSFQVDCFLWHVRKRFADQELGDAPFLDRLRRDQKSLRGRGSTLGLDIRTATREGKHIVERILEEESDEALKMTIASVPAPRYLAEMTLEEMSRDWLMLIPKQKVTGSLCIRMDQAIMDKDIILKANFSVIFNRLEALILLRAFTDEGAIVGEISPLPSLPGHTEEDVKNAIGVLIGGLEWNNNTVRVSETLQRFTWRSSDENGRSLLPPKQKRKMERTIEPEV</sequence>
<name>NS1_I97A0</name>